<accession>A1V896</accession>
<keyword id="KW-0687">Ribonucleoprotein</keyword>
<keyword id="KW-0689">Ribosomal protein</keyword>
<keyword id="KW-0694">RNA-binding</keyword>
<keyword id="KW-0699">rRNA-binding</keyword>
<keyword id="KW-0820">tRNA-binding</keyword>
<organism>
    <name type="scientific">Burkholderia mallei (strain SAVP1)</name>
    <dbReference type="NCBI Taxonomy" id="320388"/>
    <lineage>
        <taxon>Bacteria</taxon>
        <taxon>Pseudomonadati</taxon>
        <taxon>Pseudomonadota</taxon>
        <taxon>Betaproteobacteria</taxon>
        <taxon>Burkholderiales</taxon>
        <taxon>Burkholderiaceae</taxon>
        <taxon>Burkholderia</taxon>
        <taxon>pseudomallei group</taxon>
    </lineage>
</organism>
<gene>
    <name evidence="1" type="primary">rplP</name>
    <name type="ordered locus">BMASAVP1_A3162</name>
</gene>
<reference key="1">
    <citation type="journal article" date="2010" name="Genome Biol. Evol.">
        <title>Continuing evolution of Burkholderia mallei through genome reduction and large-scale rearrangements.</title>
        <authorList>
            <person name="Losada L."/>
            <person name="Ronning C.M."/>
            <person name="DeShazer D."/>
            <person name="Woods D."/>
            <person name="Fedorova N."/>
            <person name="Kim H.S."/>
            <person name="Shabalina S.A."/>
            <person name="Pearson T.R."/>
            <person name="Brinkac L."/>
            <person name="Tan P."/>
            <person name="Nandi T."/>
            <person name="Crabtree J."/>
            <person name="Badger J."/>
            <person name="Beckstrom-Sternberg S."/>
            <person name="Saqib M."/>
            <person name="Schutzer S.E."/>
            <person name="Keim P."/>
            <person name="Nierman W.C."/>
        </authorList>
    </citation>
    <scope>NUCLEOTIDE SEQUENCE [LARGE SCALE GENOMIC DNA]</scope>
    <source>
        <strain>SAVP1</strain>
    </source>
</reference>
<proteinExistence type="inferred from homology"/>
<protein>
    <recommendedName>
        <fullName evidence="1">Large ribosomal subunit protein uL16</fullName>
    </recommendedName>
    <alternativeName>
        <fullName evidence="3">50S ribosomal protein L16</fullName>
    </alternativeName>
</protein>
<comment type="function">
    <text evidence="1">Binds 23S rRNA and is also seen to make contacts with the A and possibly P site tRNAs.</text>
</comment>
<comment type="subunit">
    <text evidence="1">Part of the 50S ribosomal subunit.</text>
</comment>
<comment type="similarity">
    <text evidence="1">Belongs to the universal ribosomal protein uL16 family.</text>
</comment>
<name>RL16_BURMS</name>
<sequence length="138" mass="15583">MLQPKRRKYRKEQKGRNTGIATRGNAVSFGEFGLKAVGRGRLTARQIEAARRAMTRHIKRGGRIWIRIFPDKPISQKPAEVRMGNGKGNPEYYVAEIQPGKMLYEMDGVSEELAREAFRLAAAKLPLKTTFIVRQLGA</sequence>
<dbReference type="EMBL" id="CP000526">
    <property type="protein sequence ID" value="ABM49695.1"/>
    <property type="molecule type" value="Genomic_DNA"/>
</dbReference>
<dbReference type="RefSeq" id="WP_004199857.1">
    <property type="nucleotide sequence ID" value="NC_008785.1"/>
</dbReference>
<dbReference type="SMR" id="A1V896"/>
<dbReference type="GeneID" id="93061825"/>
<dbReference type="KEGG" id="bmv:BMASAVP1_A3162"/>
<dbReference type="HOGENOM" id="CLU_078858_2_1_4"/>
<dbReference type="GO" id="GO:0022625">
    <property type="term" value="C:cytosolic large ribosomal subunit"/>
    <property type="evidence" value="ECO:0007669"/>
    <property type="project" value="TreeGrafter"/>
</dbReference>
<dbReference type="GO" id="GO:0019843">
    <property type="term" value="F:rRNA binding"/>
    <property type="evidence" value="ECO:0007669"/>
    <property type="project" value="UniProtKB-UniRule"/>
</dbReference>
<dbReference type="GO" id="GO:0003735">
    <property type="term" value="F:structural constituent of ribosome"/>
    <property type="evidence" value="ECO:0007669"/>
    <property type="project" value="InterPro"/>
</dbReference>
<dbReference type="GO" id="GO:0000049">
    <property type="term" value="F:tRNA binding"/>
    <property type="evidence" value="ECO:0007669"/>
    <property type="project" value="UniProtKB-KW"/>
</dbReference>
<dbReference type="GO" id="GO:0006412">
    <property type="term" value="P:translation"/>
    <property type="evidence" value="ECO:0007669"/>
    <property type="project" value="UniProtKB-UniRule"/>
</dbReference>
<dbReference type="CDD" id="cd01433">
    <property type="entry name" value="Ribosomal_L16_L10e"/>
    <property type="match status" value="1"/>
</dbReference>
<dbReference type="FunFam" id="3.90.1170.10:FF:000001">
    <property type="entry name" value="50S ribosomal protein L16"/>
    <property type="match status" value="1"/>
</dbReference>
<dbReference type="Gene3D" id="3.90.1170.10">
    <property type="entry name" value="Ribosomal protein L10e/L16"/>
    <property type="match status" value="1"/>
</dbReference>
<dbReference type="HAMAP" id="MF_01342">
    <property type="entry name" value="Ribosomal_uL16"/>
    <property type="match status" value="1"/>
</dbReference>
<dbReference type="InterPro" id="IPR047873">
    <property type="entry name" value="Ribosomal_uL16"/>
</dbReference>
<dbReference type="InterPro" id="IPR000114">
    <property type="entry name" value="Ribosomal_uL16_bact-type"/>
</dbReference>
<dbReference type="InterPro" id="IPR020798">
    <property type="entry name" value="Ribosomal_uL16_CS"/>
</dbReference>
<dbReference type="InterPro" id="IPR016180">
    <property type="entry name" value="Ribosomal_uL16_dom"/>
</dbReference>
<dbReference type="InterPro" id="IPR036920">
    <property type="entry name" value="Ribosomal_uL16_sf"/>
</dbReference>
<dbReference type="NCBIfam" id="TIGR01164">
    <property type="entry name" value="rplP_bact"/>
    <property type="match status" value="1"/>
</dbReference>
<dbReference type="PANTHER" id="PTHR12220">
    <property type="entry name" value="50S/60S RIBOSOMAL PROTEIN L16"/>
    <property type="match status" value="1"/>
</dbReference>
<dbReference type="PANTHER" id="PTHR12220:SF13">
    <property type="entry name" value="LARGE RIBOSOMAL SUBUNIT PROTEIN UL16M"/>
    <property type="match status" value="1"/>
</dbReference>
<dbReference type="Pfam" id="PF00252">
    <property type="entry name" value="Ribosomal_L16"/>
    <property type="match status" value="1"/>
</dbReference>
<dbReference type="PRINTS" id="PR00060">
    <property type="entry name" value="RIBOSOMALL16"/>
</dbReference>
<dbReference type="SUPFAM" id="SSF54686">
    <property type="entry name" value="Ribosomal protein L16p/L10e"/>
    <property type="match status" value="1"/>
</dbReference>
<dbReference type="PROSITE" id="PS00586">
    <property type="entry name" value="RIBOSOMAL_L16_1"/>
    <property type="match status" value="1"/>
</dbReference>
<evidence type="ECO:0000255" key="1">
    <source>
        <dbReference type="HAMAP-Rule" id="MF_01342"/>
    </source>
</evidence>
<evidence type="ECO:0000256" key="2">
    <source>
        <dbReference type="SAM" id="MobiDB-lite"/>
    </source>
</evidence>
<evidence type="ECO:0000305" key="3"/>
<feature type="chain" id="PRO_1000054591" description="Large ribosomal subunit protein uL16">
    <location>
        <begin position="1"/>
        <end position="138"/>
    </location>
</feature>
<feature type="region of interest" description="Disordered" evidence="2">
    <location>
        <begin position="1"/>
        <end position="20"/>
    </location>
</feature>
<feature type="compositionally biased region" description="Basic residues" evidence="2">
    <location>
        <begin position="1"/>
        <end position="13"/>
    </location>
</feature>